<accession>Q8DE64</accession>
<sequence>MRHRKSGRQLNRNSSHRKAMFSNMASSLVRHEVIKTTLPKAKELRRVVEPLITLAKTDSVANRRLAFARTRDNEVVAKLFNELGPRFAARQGGYTRILKAGFRAGDKAPMAYIELVDRPAAEEAAAE</sequence>
<dbReference type="EMBL" id="AE016795">
    <property type="protein sequence ID" value="AAO09244.1"/>
    <property type="molecule type" value="Genomic_DNA"/>
</dbReference>
<dbReference type="RefSeq" id="WP_011078810.1">
    <property type="nucleotide sequence ID" value="NC_004459.3"/>
</dbReference>
<dbReference type="SMR" id="Q8DE64"/>
<dbReference type="GeneID" id="93895040"/>
<dbReference type="KEGG" id="vvu:VV1_0735"/>
<dbReference type="HOGENOM" id="CLU_074407_2_0_6"/>
<dbReference type="Proteomes" id="UP000002275">
    <property type="component" value="Chromosome 1"/>
</dbReference>
<dbReference type="GO" id="GO:0022625">
    <property type="term" value="C:cytosolic large ribosomal subunit"/>
    <property type="evidence" value="ECO:0007669"/>
    <property type="project" value="TreeGrafter"/>
</dbReference>
<dbReference type="GO" id="GO:0003735">
    <property type="term" value="F:structural constituent of ribosome"/>
    <property type="evidence" value="ECO:0007669"/>
    <property type="project" value="InterPro"/>
</dbReference>
<dbReference type="GO" id="GO:0006412">
    <property type="term" value="P:translation"/>
    <property type="evidence" value="ECO:0007669"/>
    <property type="project" value="UniProtKB-UniRule"/>
</dbReference>
<dbReference type="FunFam" id="3.90.1030.10:FF:000001">
    <property type="entry name" value="50S ribosomal protein L17"/>
    <property type="match status" value="1"/>
</dbReference>
<dbReference type="Gene3D" id="3.90.1030.10">
    <property type="entry name" value="Ribosomal protein L17"/>
    <property type="match status" value="1"/>
</dbReference>
<dbReference type="HAMAP" id="MF_01368">
    <property type="entry name" value="Ribosomal_bL17"/>
    <property type="match status" value="1"/>
</dbReference>
<dbReference type="InterPro" id="IPR000456">
    <property type="entry name" value="Ribosomal_bL17"/>
</dbReference>
<dbReference type="InterPro" id="IPR047859">
    <property type="entry name" value="Ribosomal_bL17_CS"/>
</dbReference>
<dbReference type="InterPro" id="IPR036373">
    <property type="entry name" value="Ribosomal_bL17_sf"/>
</dbReference>
<dbReference type="NCBIfam" id="TIGR00059">
    <property type="entry name" value="L17"/>
    <property type="match status" value="1"/>
</dbReference>
<dbReference type="PANTHER" id="PTHR14413:SF16">
    <property type="entry name" value="LARGE RIBOSOMAL SUBUNIT PROTEIN BL17M"/>
    <property type="match status" value="1"/>
</dbReference>
<dbReference type="PANTHER" id="PTHR14413">
    <property type="entry name" value="RIBOSOMAL PROTEIN L17"/>
    <property type="match status" value="1"/>
</dbReference>
<dbReference type="Pfam" id="PF01196">
    <property type="entry name" value="Ribosomal_L17"/>
    <property type="match status" value="1"/>
</dbReference>
<dbReference type="SUPFAM" id="SSF64263">
    <property type="entry name" value="Prokaryotic ribosomal protein L17"/>
    <property type="match status" value="1"/>
</dbReference>
<dbReference type="PROSITE" id="PS01167">
    <property type="entry name" value="RIBOSOMAL_L17"/>
    <property type="match status" value="1"/>
</dbReference>
<evidence type="ECO:0000255" key="1">
    <source>
        <dbReference type="HAMAP-Rule" id="MF_01368"/>
    </source>
</evidence>
<evidence type="ECO:0000305" key="2"/>
<reference key="1">
    <citation type="submission" date="2002-12" db="EMBL/GenBank/DDBJ databases">
        <title>Complete genome sequence of Vibrio vulnificus CMCP6.</title>
        <authorList>
            <person name="Rhee J.H."/>
            <person name="Kim S.Y."/>
            <person name="Chung S.S."/>
            <person name="Kim J.J."/>
            <person name="Moon Y.H."/>
            <person name="Jeong H."/>
            <person name="Choy H.E."/>
        </authorList>
    </citation>
    <scope>NUCLEOTIDE SEQUENCE [LARGE SCALE GENOMIC DNA]</scope>
    <source>
        <strain>CMCP6</strain>
    </source>
</reference>
<proteinExistence type="inferred from homology"/>
<name>RL17_VIBVU</name>
<gene>
    <name evidence="1" type="primary">rplQ</name>
    <name type="ordered locus">VV1_0735</name>
</gene>
<feature type="chain" id="PRO_0000267966" description="Large ribosomal subunit protein bL17">
    <location>
        <begin position="1"/>
        <end position="127"/>
    </location>
</feature>
<organism>
    <name type="scientific">Vibrio vulnificus (strain CMCP6)</name>
    <dbReference type="NCBI Taxonomy" id="216895"/>
    <lineage>
        <taxon>Bacteria</taxon>
        <taxon>Pseudomonadati</taxon>
        <taxon>Pseudomonadota</taxon>
        <taxon>Gammaproteobacteria</taxon>
        <taxon>Vibrionales</taxon>
        <taxon>Vibrionaceae</taxon>
        <taxon>Vibrio</taxon>
    </lineage>
</organism>
<keyword id="KW-0687">Ribonucleoprotein</keyword>
<keyword id="KW-0689">Ribosomal protein</keyword>
<protein>
    <recommendedName>
        <fullName evidence="1">Large ribosomal subunit protein bL17</fullName>
    </recommendedName>
    <alternativeName>
        <fullName evidence="2">50S ribosomal protein L17</fullName>
    </alternativeName>
</protein>
<comment type="subunit">
    <text evidence="1">Part of the 50S ribosomal subunit. Contacts protein L32.</text>
</comment>
<comment type="similarity">
    <text evidence="1">Belongs to the bacterial ribosomal protein bL17 family.</text>
</comment>